<reference key="1">
    <citation type="submission" date="2008-02" db="EMBL/GenBank/DDBJ databases">
        <title>Complete sequence of Escherichia coli C str. ATCC 8739.</title>
        <authorList>
            <person name="Copeland A."/>
            <person name="Lucas S."/>
            <person name="Lapidus A."/>
            <person name="Glavina del Rio T."/>
            <person name="Dalin E."/>
            <person name="Tice H."/>
            <person name="Bruce D."/>
            <person name="Goodwin L."/>
            <person name="Pitluck S."/>
            <person name="Kiss H."/>
            <person name="Brettin T."/>
            <person name="Detter J.C."/>
            <person name="Han C."/>
            <person name="Kuske C.R."/>
            <person name="Schmutz J."/>
            <person name="Larimer F."/>
            <person name="Land M."/>
            <person name="Hauser L."/>
            <person name="Kyrpides N."/>
            <person name="Mikhailova N."/>
            <person name="Ingram L."/>
            <person name="Richardson P."/>
        </authorList>
    </citation>
    <scope>NUCLEOTIDE SEQUENCE [LARGE SCALE GENOMIC DNA]</scope>
    <source>
        <strain>ATCC 8739 / DSM 1576 / NBRC 3972 / NCIMB 8545 / WDCM 00012 / Crooks</strain>
    </source>
</reference>
<accession>B1IUG7</accession>
<keyword id="KW-0067">ATP-binding</keyword>
<keyword id="KW-0418">Kinase</keyword>
<keyword id="KW-0545">Nucleotide biosynthesis</keyword>
<keyword id="KW-0547">Nucleotide-binding</keyword>
<keyword id="KW-0808">Transferase</keyword>
<dbReference type="EC" id="2.7.4.9" evidence="1"/>
<dbReference type="EMBL" id="CP000946">
    <property type="protein sequence ID" value="ACA78134.1"/>
    <property type="molecule type" value="Genomic_DNA"/>
</dbReference>
<dbReference type="RefSeq" id="WP_001257000.1">
    <property type="nucleotide sequence ID" value="NZ_MTFT01000032.1"/>
</dbReference>
<dbReference type="SMR" id="B1IUG7"/>
<dbReference type="GeneID" id="93776310"/>
<dbReference type="KEGG" id="ecl:EcolC_2503"/>
<dbReference type="HOGENOM" id="CLU_049131_0_1_6"/>
<dbReference type="GO" id="GO:0005829">
    <property type="term" value="C:cytosol"/>
    <property type="evidence" value="ECO:0007669"/>
    <property type="project" value="TreeGrafter"/>
</dbReference>
<dbReference type="GO" id="GO:0005524">
    <property type="term" value="F:ATP binding"/>
    <property type="evidence" value="ECO:0007669"/>
    <property type="project" value="UniProtKB-UniRule"/>
</dbReference>
<dbReference type="GO" id="GO:0004798">
    <property type="term" value="F:dTMP kinase activity"/>
    <property type="evidence" value="ECO:0007669"/>
    <property type="project" value="UniProtKB-UniRule"/>
</dbReference>
<dbReference type="GO" id="GO:0006233">
    <property type="term" value="P:dTDP biosynthetic process"/>
    <property type="evidence" value="ECO:0007669"/>
    <property type="project" value="InterPro"/>
</dbReference>
<dbReference type="GO" id="GO:0006235">
    <property type="term" value="P:dTTP biosynthetic process"/>
    <property type="evidence" value="ECO:0007669"/>
    <property type="project" value="UniProtKB-UniRule"/>
</dbReference>
<dbReference type="GO" id="GO:0006227">
    <property type="term" value="P:dUDP biosynthetic process"/>
    <property type="evidence" value="ECO:0007669"/>
    <property type="project" value="TreeGrafter"/>
</dbReference>
<dbReference type="CDD" id="cd01672">
    <property type="entry name" value="TMPK"/>
    <property type="match status" value="1"/>
</dbReference>
<dbReference type="FunFam" id="3.40.50.300:FF:000321">
    <property type="entry name" value="Thymidylate kinase"/>
    <property type="match status" value="1"/>
</dbReference>
<dbReference type="Gene3D" id="3.40.50.300">
    <property type="entry name" value="P-loop containing nucleotide triphosphate hydrolases"/>
    <property type="match status" value="1"/>
</dbReference>
<dbReference type="HAMAP" id="MF_00165">
    <property type="entry name" value="Thymidylate_kinase"/>
    <property type="match status" value="1"/>
</dbReference>
<dbReference type="InterPro" id="IPR027417">
    <property type="entry name" value="P-loop_NTPase"/>
</dbReference>
<dbReference type="InterPro" id="IPR039430">
    <property type="entry name" value="Thymidylate_kin-like_dom"/>
</dbReference>
<dbReference type="InterPro" id="IPR018095">
    <property type="entry name" value="Thymidylate_kin_CS"/>
</dbReference>
<dbReference type="InterPro" id="IPR018094">
    <property type="entry name" value="Thymidylate_kinase"/>
</dbReference>
<dbReference type="NCBIfam" id="TIGR00041">
    <property type="entry name" value="DTMP_kinase"/>
    <property type="match status" value="1"/>
</dbReference>
<dbReference type="PANTHER" id="PTHR10344">
    <property type="entry name" value="THYMIDYLATE KINASE"/>
    <property type="match status" value="1"/>
</dbReference>
<dbReference type="PANTHER" id="PTHR10344:SF4">
    <property type="entry name" value="UMP-CMP KINASE 2, MITOCHONDRIAL"/>
    <property type="match status" value="1"/>
</dbReference>
<dbReference type="Pfam" id="PF02223">
    <property type="entry name" value="Thymidylate_kin"/>
    <property type="match status" value="1"/>
</dbReference>
<dbReference type="SUPFAM" id="SSF52540">
    <property type="entry name" value="P-loop containing nucleoside triphosphate hydrolases"/>
    <property type="match status" value="1"/>
</dbReference>
<dbReference type="PROSITE" id="PS01331">
    <property type="entry name" value="THYMIDYLATE_KINASE"/>
    <property type="match status" value="1"/>
</dbReference>
<sequence>MRSKYIVIEGLEGAGKTTARNVVVETLEQLGIRDMVFTREPGGTQLAEKLRSLVLDIKSVGDEVITDKAEVLMFYAARVQLVETVIKPALANGTWVIGDRHDLSTQAYQGGGRGIDQHMLATLRDAVLGDFRPDLTLYLDVTPEVGLKRARARGELDRIEQESFDFFNRTRARYLELAAQDKSIHTIDATQPLEAVMDAIRTTVTHWVKELDA</sequence>
<protein>
    <recommendedName>
        <fullName evidence="1">Thymidylate kinase</fullName>
        <ecNumber evidence="1">2.7.4.9</ecNumber>
    </recommendedName>
    <alternativeName>
        <fullName evidence="1">dTMP kinase</fullName>
    </alternativeName>
</protein>
<gene>
    <name evidence="1" type="primary">tmk</name>
    <name type="ordered locus">EcolC_2503</name>
</gene>
<name>KTHY_ECOLC</name>
<evidence type="ECO:0000255" key="1">
    <source>
        <dbReference type="HAMAP-Rule" id="MF_00165"/>
    </source>
</evidence>
<comment type="function">
    <text evidence="1">Phosphorylation of dTMP to form dTDP in both de novo and salvage pathways of dTTP synthesis.</text>
</comment>
<comment type="catalytic activity">
    <reaction evidence="1">
        <text>dTMP + ATP = dTDP + ADP</text>
        <dbReference type="Rhea" id="RHEA:13517"/>
        <dbReference type="ChEBI" id="CHEBI:30616"/>
        <dbReference type="ChEBI" id="CHEBI:58369"/>
        <dbReference type="ChEBI" id="CHEBI:63528"/>
        <dbReference type="ChEBI" id="CHEBI:456216"/>
        <dbReference type="EC" id="2.7.4.9"/>
    </reaction>
</comment>
<comment type="similarity">
    <text evidence="1">Belongs to the thymidylate kinase family.</text>
</comment>
<feature type="chain" id="PRO_1000076963" description="Thymidylate kinase">
    <location>
        <begin position="1"/>
        <end position="213"/>
    </location>
</feature>
<feature type="binding site" evidence="1">
    <location>
        <begin position="10"/>
        <end position="17"/>
    </location>
    <ligand>
        <name>ATP</name>
        <dbReference type="ChEBI" id="CHEBI:30616"/>
    </ligand>
</feature>
<proteinExistence type="inferred from homology"/>
<organism>
    <name type="scientific">Escherichia coli (strain ATCC 8739 / DSM 1576 / NBRC 3972 / NCIMB 8545 / WDCM 00012 / Crooks)</name>
    <dbReference type="NCBI Taxonomy" id="481805"/>
    <lineage>
        <taxon>Bacteria</taxon>
        <taxon>Pseudomonadati</taxon>
        <taxon>Pseudomonadota</taxon>
        <taxon>Gammaproteobacteria</taxon>
        <taxon>Enterobacterales</taxon>
        <taxon>Enterobacteriaceae</taxon>
        <taxon>Escherichia</taxon>
    </lineage>
</organism>